<keyword id="KW-1185">Reference proteome</keyword>
<keyword id="KW-0687">Ribonucleoprotein</keyword>
<keyword id="KW-0689">Ribosomal protein</keyword>
<organism>
    <name type="scientific">Borrelia turicatae (strain 91E135)</name>
    <dbReference type="NCBI Taxonomy" id="314724"/>
    <lineage>
        <taxon>Bacteria</taxon>
        <taxon>Pseudomonadati</taxon>
        <taxon>Spirochaetota</taxon>
        <taxon>Spirochaetia</taxon>
        <taxon>Spirochaetales</taxon>
        <taxon>Borreliaceae</taxon>
        <taxon>Borrelia</taxon>
    </lineage>
</organism>
<accession>A1QZM6</accession>
<feature type="chain" id="PRO_1000134427" description="Large ribosomal subunit protein bL34">
    <location>
        <begin position="1"/>
        <end position="51"/>
    </location>
</feature>
<evidence type="ECO:0000255" key="1">
    <source>
        <dbReference type="HAMAP-Rule" id="MF_00391"/>
    </source>
</evidence>
<evidence type="ECO:0000305" key="2"/>
<reference key="1">
    <citation type="submission" date="2004-12" db="EMBL/GenBank/DDBJ databases">
        <title>The genome sequence of Borrelia hermsii and Borrelia turicatae: comparative analysis of two agents of endemic N. America relapsing fever.</title>
        <authorList>
            <person name="Porcella S.F."/>
            <person name="Raffel S.J."/>
            <person name="Schrumpf M.E."/>
            <person name="Montgomery B."/>
            <person name="Smith T."/>
            <person name="Schwan T.G."/>
        </authorList>
    </citation>
    <scope>NUCLEOTIDE SEQUENCE [LARGE SCALE GENOMIC DNA]</scope>
    <source>
        <strain>91E135</strain>
    </source>
</reference>
<gene>
    <name evidence="1" type="primary">rpmH</name>
    <name type="ordered locus">BT0440</name>
</gene>
<comment type="similarity">
    <text evidence="1">Belongs to the bacterial ribosomal protein bL34 family.</text>
</comment>
<sequence length="51" mass="6141">MKRTYQPSRVKRNRKFGFRARMKTKGGRLILARRRAKGRSKLTVSDEKKKY</sequence>
<dbReference type="EMBL" id="CP000049">
    <property type="protein sequence ID" value="AAX17768.1"/>
    <property type="molecule type" value="Genomic_DNA"/>
</dbReference>
<dbReference type="RefSeq" id="WP_011772387.1">
    <property type="nucleotide sequence ID" value="NZ_CP073176.1"/>
</dbReference>
<dbReference type="SMR" id="A1QZM6"/>
<dbReference type="KEGG" id="btu:BT0440"/>
<dbReference type="eggNOG" id="COG0230">
    <property type="taxonomic scope" value="Bacteria"/>
</dbReference>
<dbReference type="HOGENOM" id="CLU_129938_2_0_12"/>
<dbReference type="Proteomes" id="UP000001205">
    <property type="component" value="Chromosome"/>
</dbReference>
<dbReference type="GO" id="GO:1990904">
    <property type="term" value="C:ribonucleoprotein complex"/>
    <property type="evidence" value="ECO:0007669"/>
    <property type="project" value="UniProtKB-KW"/>
</dbReference>
<dbReference type="GO" id="GO:0005840">
    <property type="term" value="C:ribosome"/>
    <property type="evidence" value="ECO:0007669"/>
    <property type="project" value="UniProtKB-KW"/>
</dbReference>
<dbReference type="GO" id="GO:0003735">
    <property type="term" value="F:structural constituent of ribosome"/>
    <property type="evidence" value="ECO:0007669"/>
    <property type="project" value="InterPro"/>
</dbReference>
<dbReference type="GO" id="GO:0006412">
    <property type="term" value="P:translation"/>
    <property type="evidence" value="ECO:0007669"/>
    <property type="project" value="UniProtKB-UniRule"/>
</dbReference>
<dbReference type="FunFam" id="1.10.287.3980:FF:000001">
    <property type="entry name" value="Mitochondrial ribosomal protein L34"/>
    <property type="match status" value="1"/>
</dbReference>
<dbReference type="Gene3D" id="1.10.287.3980">
    <property type="match status" value="1"/>
</dbReference>
<dbReference type="HAMAP" id="MF_00391">
    <property type="entry name" value="Ribosomal_bL34"/>
    <property type="match status" value="1"/>
</dbReference>
<dbReference type="InterPro" id="IPR000271">
    <property type="entry name" value="Ribosomal_bL34"/>
</dbReference>
<dbReference type="InterPro" id="IPR020939">
    <property type="entry name" value="Ribosomal_bL34_CS"/>
</dbReference>
<dbReference type="NCBIfam" id="TIGR01030">
    <property type="entry name" value="rpmH_bact"/>
    <property type="match status" value="1"/>
</dbReference>
<dbReference type="PANTHER" id="PTHR14503:SF4">
    <property type="entry name" value="LARGE RIBOSOMAL SUBUNIT PROTEIN BL34M"/>
    <property type="match status" value="1"/>
</dbReference>
<dbReference type="PANTHER" id="PTHR14503">
    <property type="entry name" value="MITOCHONDRIAL RIBOSOMAL PROTEIN 34 FAMILY MEMBER"/>
    <property type="match status" value="1"/>
</dbReference>
<dbReference type="Pfam" id="PF00468">
    <property type="entry name" value="Ribosomal_L34"/>
    <property type="match status" value="1"/>
</dbReference>
<dbReference type="PROSITE" id="PS00784">
    <property type="entry name" value="RIBOSOMAL_L34"/>
    <property type="match status" value="1"/>
</dbReference>
<name>RL34_BORT9</name>
<protein>
    <recommendedName>
        <fullName evidence="1">Large ribosomal subunit protein bL34</fullName>
    </recommendedName>
    <alternativeName>
        <fullName evidence="2">50S ribosomal protein L34</fullName>
    </alternativeName>
</protein>
<proteinExistence type="inferred from homology"/>